<feature type="signal peptide" evidence="1">
    <location>
        <begin position="1"/>
        <end position="19"/>
    </location>
</feature>
<feature type="chain" id="PRO_0000014200" description="Serine/threonine-rich protein adg2">
    <location>
        <begin position="20"/>
        <end position="670"/>
    </location>
</feature>
<feature type="region of interest" description="Disordered" evidence="2">
    <location>
        <begin position="526"/>
        <end position="651"/>
    </location>
</feature>
<feature type="glycosylation site" description="N-linked (GlcNAc...) asparagine" evidence="1">
    <location>
        <position position="77"/>
    </location>
</feature>
<feature type="glycosylation site" description="N-linked (GlcNAc...) asparagine" evidence="1">
    <location>
        <position position="159"/>
    </location>
</feature>
<feature type="glycosylation site" description="N-linked (GlcNAc...) asparagine" evidence="1">
    <location>
        <position position="204"/>
    </location>
</feature>
<feature type="glycosylation site" description="N-linked (GlcNAc...) asparagine" evidence="1">
    <location>
        <position position="224"/>
    </location>
</feature>
<feature type="glycosylation site" description="N-linked (GlcNAc...) asparagine" evidence="1">
    <location>
        <position position="274"/>
    </location>
</feature>
<feature type="glycosylation site" description="N-linked (GlcNAc...) asparagine" evidence="1">
    <location>
        <position position="297"/>
    </location>
</feature>
<feature type="glycosylation site" description="N-linked (GlcNAc...) asparagine" evidence="1">
    <location>
        <position position="327"/>
    </location>
</feature>
<feature type="glycosylation site" description="N-linked (GlcNAc...) asparagine" evidence="1">
    <location>
        <position position="351"/>
    </location>
</feature>
<feature type="glycosylation site" description="N-linked (GlcNAc...) asparagine" evidence="1">
    <location>
        <position position="370"/>
    </location>
</feature>
<feature type="glycosylation site" description="N-linked (GlcNAc...) asparagine" evidence="1">
    <location>
        <position position="381"/>
    </location>
</feature>
<feature type="glycosylation site" description="N-linked (GlcNAc...) asparagine" evidence="1">
    <location>
        <position position="405"/>
    </location>
</feature>
<feature type="glycosylation site" description="N-linked (GlcNAc...) asparagine" evidence="1">
    <location>
        <position position="424"/>
    </location>
</feature>
<feature type="glycosylation site" description="N-linked (GlcNAc...) asparagine" evidence="1">
    <location>
        <position position="435"/>
    </location>
</feature>
<feature type="glycosylation site" description="N-linked (GlcNAc...) asparagine" evidence="1">
    <location>
        <position position="459"/>
    </location>
</feature>
<feature type="glycosylation site" description="N-linked (GlcNAc...) asparagine" evidence="1">
    <location>
        <position position="478"/>
    </location>
</feature>
<feature type="glycosylation site" description="N-linked (GlcNAc...) asparagine" evidence="1">
    <location>
        <position position="489"/>
    </location>
</feature>
<feature type="glycosylation site" description="N-linked (GlcNAc...) asparagine" evidence="1">
    <location>
        <position position="513"/>
    </location>
</feature>
<name>ADG2_SCHPO</name>
<organism>
    <name type="scientific">Schizosaccharomyces pombe (strain 972 / ATCC 24843)</name>
    <name type="common">Fission yeast</name>
    <dbReference type="NCBI Taxonomy" id="284812"/>
    <lineage>
        <taxon>Eukaryota</taxon>
        <taxon>Fungi</taxon>
        <taxon>Dikarya</taxon>
        <taxon>Ascomycota</taxon>
        <taxon>Taphrinomycotina</taxon>
        <taxon>Schizosaccharomycetes</taxon>
        <taxon>Schizosaccharomycetales</taxon>
        <taxon>Schizosaccharomycetaceae</taxon>
        <taxon>Schizosaccharomyces</taxon>
    </lineage>
</organism>
<sequence>MRRLTISGLLISLAKLCAGMEINVPSSSDVWTSGHIEPLEWSVVSTDPLQANVWLINEVEYPPTSRYIMTINTFDENATFPALDLSPGYGYQISFTSIRDDSVIYAQSGTFYIVGGEGISSTTGSTFQSMTTFTSSQTNSGHASASTSIPSTAITVTANSTIYSSATSSFPYSTDVSVSTGTSTDIVTLPPPASSTSSFSTITNTSMIPSSSSFTTTTGSPYYNTSSFLPSSVISSASLSSSSVLPTSIITSTSTPVTVSSSSLSSFTPSYSTNLTTTGSTTTTGSATVSSSPFYSNSSVIPTSVPSSVSSFTSSSSSYTTTLTASNTSVTYTGTGTGSATFTSSPPFYSNSSVIPTSVPSSVSSFTSSNSSYTTTLTASNTSITYTGTGTGSATFTSSPPFYSNSSVIPTSVPSSVSSFTSSNSSYTTTLTASNTTVTFTGTGTGSATFTSSPPFYSNSSVIPTSAPSSVSSFTSSNSSYTTTLTASNTTVTFTGTGTGSATATSSSPYYSNSSIIVPTTVSTSGSVSSFSSSPSPTSSFSGTSALSSSSNEETTTTTQVTYTTSPEETTTTMTTTTCSSRPEETISTVSTTSTVSESGSSSASITSTYPSSTLSMTTSHLSSSSVHSSSAHSSSSRSSSMSLPPSAGSSTSLQRISLLCVFIPLLFLF</sequence>
<dbReference type="EMBL" id="CU329670">
    <property type="protein sequence ID" value="CAB10128.2"/>
    <property type="molecule type" value="Genomic_DNA"/>
</dbReference>
<dbReference type="RefSeq" id="XP_001713101.1">
    <property type="nucleotide sequence ID" value="XM_001713049.2"/>
</dbReference>
<dbReference type="BioGRID" id="858083">
    <property type="interactions" value="22"/>
</dbReference>
<dbReference type="STRING" id="284812.O13854"/>
<dbReference type="GlyCosmos" id="O13854">
    <property type="glycosylation" value="17 sites, No reported glycans"/>
</dbReference>
<dbReference type="iPTMnet" id="O13854"/>
<dbReference type="PaxDb" id="4896-SPAC19G12.16c.1"/>
<dbReference type="EnsemblFungi" id="SPAC19G12.16c.1">
    <property type="protein sequence ID" value="SPAC19G12.16c.1:pep"/>
    <property type="gene ID" value="SPAC19G12.16c"/>
</dbReference>
<dbReference type="PomBase" id="SPAC19G12.16c">
    <property type="gene designation" value="adg2"/>
</dbReference>
<dbReference type="VEuPathDB" id="FungiDB:SPAC19G12.16c"/>
<dbReference type="HOGENOM" id="CLU_410014_0_0_1"/>
<dbReference type="InParanoid" id="O13854"/>
<dbReference type="OMA" id="WYSILPV"/>
<dbReference type="PRO" id="PR:O13854"/>
<dbReference type="Proteomes" id="UP000002485">
    <property type="component" value="Chromosome I"/>
</dbReference>
<dbReference type="GO" id="GO:0009986">
    <property type="term" value="C:cell surface"/>
    <property type="evidence" value="ECO:0000304"/>
    <property type="project" value="PomBase"/>
</dbReference>
<dbReference type="GO" id="GO:0005783">
    <property type="term" value="C:endoplasmic reticulum"/>
    <property type="evidence" value="ECO:0007669"/>
    <property type="project" value="UniProtKB-SubCell"/>
</dbReference>
<dbReference type="GO" id="GO:0005576">
    <property type="term" value="C:extracellular region"/>
    <property type="evidence" value="ECO:0007669"/>
    <property type="project" value="UniProtKB-SubCell"/>
</dbReference>
<dbReference type="InterPro" id="IPR052479">
    <property type="entry name" value="GPI-anchor_Adhesion_Reg"/>
</dbReference>
<dbReference type="PANTHER" id="PTHR35185">
    <property type="entry name" value="SERINE/THREONINE-RICH PROTEIN ADG2-RELATED"/>
    <property type="match status" value="1"/>
</dbReference>
<dbReference type="PANTHER" id="PTHR35185:SF3">
    <property type="entry name" value="SERINE_THREONINE-RICH PROTEIN ADG2"/>
    <property type="match status" value="1"/>
</dbReference>
<gene>
    <name type="primary">adg2</name>
    <name type="synonym">mug46</name>
    <name type="ORF">SPAC19G12.16c</name>
    <name type="ORF">SPAC23A1.01c</name>
</gene>
<keyword id="KW-0256">Endoplasmic reticulum</keyword>
<keyword id="KW-0325">Glycoprotein</keyword>
<keyword id="KW-1185">Reference proteome</keyword>
<keyword id="KW-0964">Secreted</keyword>
<keyword id="KW-0732">Signal</keyword>
<protein>
    <recommendedName>
        <fullName>Serine/threonine-rich protein adg2</fullName>
    </recommendedName>
    <alternativeName>
        <fullName>Meiotically up-regulated gene 46 protein</fullName>
    </alternativeName>
</protein>
<accession>O13854</accession>
<accession>O42840</accession>
<reference key="1">
    <citation type="journal article" date="2002" name="Nature">
        <title>The genome sequence of Schizosaccharomyces pombe.</title>
        <authorList>
            <person name="Wood V."/>
            <person name="Gwilliam R."/>
            <person name="Rajandream M.A."/>
            <person name="Lyne M.H."/>
            <person name="Lyne R."/>
            <person name="Stewart A."/>
            <person name="Sgouros J.G."/>
            <person name="Peat N."/>
            <person name="Hayles J."/>
            <person name="Baker S.G."/>
            <person name="Basham D."/>
            <person name="Bowman S."/>
            <person name="Brooks K."/>
            <person name="Brown D."/>
            <person name="Brown S."/>
            <person name="Chillingworth T."/>
            <person name="Churcher C.M."/>
            <person name="Collins M."/>
            <person name="Connor R."/>
            <person name="Cronin A."/>
            <person name="Davis P."/>
            <person name="Feltwell T."/>
            <person name="Fraser A."/>
            <person name="Gentles S."/>
            <person name="Goble A."/>
            <person name="Hamlin N."/>
            <person name="Harris D.E."/>
            <person name="Hidalgo J."/>
            <person name="Hodgson G."/>
            <person name="Holroyd S."/>
            <person name="Hornsby T."/>
            <person name="Howarth S."/>
            <person name="Huckle E.J."/>
            <person name="Hunt S."/>
            <person name="Jagels K."/>
            <person name="James K.D."/>
            <person name="Jones L."/>
            <person name="Jones M."/>
            <person name="Leather S."/>
            <person name="McDonald S."/>
            <person name="McLean J."/>
            <person name="Mooney P."/>
            <person name="Moule S."/>
            <person name="Mungall K.L."/>
            <person name="Murphy L.D."/>
            <person name="Niblett D."/>
            <person name="Odell C."/>
            <person name="Oliver K."/>
            <person name="O'Neil S."/>
            <person name="Pearson D."/>
            <person name="Quail M.A."/>
            <person name="Rabbinowitsch E."/>
            <person name="Rutherford K.M."/>
            <person name="Rutter S."/>
            <person name="Saunders D."/>
            <person name="Seeger K."/>
            <person name="Sharp S."/>
            <person name="Skelton J."/>
            <person name="Simmonds M.N."/>
            <person name="Squares R."/>
            <person name="Squares S."/>
            <person name="Stevens K."/>
            <person name="Taylor K."/>
            <person name="Taylor R.G."/>
            <person name="Tivey A."/>
            <person name="Walsh S.V."/>
            <person name="Warren T."/>
            <person name="Whitehead S."/>
            <person name="Woodward J.R."/>
            <person name="Volckaert G."/>
            <person name="Aert R."/>
            <person name="Robben J."/>
            <person name="Grymonprez B."/>
            <person name="Weltjens I."/>
            <person name="Vanstreels E."/>
            <person name="Rieger M."/>
            <person name="Schaefer M."/>
            <person name="Mueller-Auer S."/>
            <person name="Gabel C."/>
            <person name="Fuchs M."/>
            <person name="Duesterhoeft A."/>
            <person name="Fritzc C."/>
            <person name="Holzer E."/>
            <person name="Moestl D."/>
            <person name="Hilbert H."/>
            <person name="Borzym K."/>
            <person name="Langer I."/>
            <person name="Beck A."/>
            <person name="Lehrach H."/>
            <person name="Reinhardt R."/>
            <person name="Pohl T.M."/>
            <person name="Eger P."/>
            <person name="Zimmermann W."/>
            <person name="Wedler H."/>
            <person name="Wambutt R."/>
            <person name="Purnelle B."/>
            <person name="Goffeau A."/>
            <person name="Cadieu E."/>
            <person name="Dreano S."/>
            <person name="Gloux S."/>
            <person name="Lelaure V."/>
            <person name="Mottier S."/>
            <person name="Galibert F."/>
            <person name="Aves S.J."/>
            <person name="Xiang Z."/>
            <person name="Hunt C."/>
            <person name="Moore K."/>
            <person name="Hurst S.M."/>
            <person name="Lucas M."/>
            <person name="Rochet M."/>
            <person name="Gaillardin C."/>
            <person name="Tallada V.A."/>
            <person name="Garzon A."/>
            <person name="Thode G."/>
            <person name="Daga R.R."/>
            <person name="Cruzado L."/>
            <person name="Jimenez J."/>
            <person name="Sanchez M."/>
            <person name="del Rey F."/>
            <person name="Benito J."/>
            <person name="Dominguez A."/>
            <person name="Revuelta J.L."/>
            <person name="Moreno S."/>
            <person name="Armstrong J."/>
            <person name="Forsburg S.L."/>
            <person name="Cerutti L."/>
            <person name="Lowe T."/>
            <person name="McCombie W.R."/>
            <person name="Paulsen I."/>
            <person name="Potashkin J."/>
            <person name="Shpakovski G.V."/>
            <person name="Ussery D."/>
            <person name="Barrell B.G."/>
            <person name="Nurse P."/>
        </authorList>
    </citation>
    <scope>NUCLEOTIDE SEQUENCE [LARGE SCALE GENOMIC DNA]</scope>
    <source>
        <strain>972 / ATCC 24843</strain>
    </source>
</reference>
<reference key="2">
    <citation type="journal article" date="2006" name="Nat. Biotechnol.">
        <title>ORFeome cloning and global analysis of protein localization in the fission yeast Schizosaccharomyces pombe.</title>
        <authorList>
            <person name="Matsuyama A."/>
            <person name="Arai R."/>
            <person name="Yashiroda Y."/>
            <person name="Shirai A."/>
            <person name="Kamata A."/>
            <person name="Sekido S."/>
            <person name="Kobayashi Y."/>
            <person name="Hashimoto A."/>
            <person name="Hamamoto M."/>
            <person name="Hiraoka Y."/>
            <person name="Horinouchi S."/>
            <person name="Yoshida M."/>
        </authorList>
    </citation>
    <scope>SUBCELLULAR LOCATION [LARGE SCALE ANALYSIS]</scope>
</reference>
<comment type="subcellular location">
    <subcellularLocation>
        <location evidence="4">Secreted</location>
    </subcellularLocation>
    <subcellularLocation>
        <location evidence="3">Endoplasmic reticulum</location>
    </subcellularLocation>
</comment>
<evidence type="ECO:0000255" key="1"/>
<evidence type="ECO:0000256" key="2">
    <source>
        <dbReference type="SAM" id="MobiDB-lite"/>
    </source>
</evidence>
<evidence type="ECO:0000269" key="3">
    <source>
    </source>
</evidence>
<evidence type="ECO:0000305" key="4"/>
<proteinExistence type="inferred from homology"/>